<sequence length="444" mass="45365">MGRLFGTDGVRGVANRELTAELALALGAAAARQLASGSAPGRRVAVIGRDPRASGEMLEAAVIAGLTSQGVDALRVGVLPTPAVAYLTGAYDADFGVMISASHNPMPDNGIKIFGPGGHKLDDGTEDRIEALVGDAGPRPVGAGIGRVIDAEDAADRYLRHLSKASTLRLDGLTVVVDCAHGAASAVAPRAYRAAGARVIAINADPNGLNINDNCGSTHLDSLRAAVVAHRADLGLAHDGDADRCLAVDADGNLVDGDHIMVVLALAMREAGELASDTLVTTVMSNLGLHLAMRSAGITVRTTGVGDRYVVEELRAGDFSLGGEQSGHIVMPALGSTGDGIVTGLRLMTRMAQTGSPLSDLASAMQTLPQVLINVTVADKATAATAPSVQTAVGQAAAELGDTGRILLRPSGTEPMIRVMVEAPEKDIAQRLATRVAEAVSAAR</sequence>
<dbReference type="EC" id="5.4.2.10" evidence="1"/>
<dbReference type="EMBL" id="AE016958">
    <property type="protein sequence ID" value="AAS06797.1"/>
    <property type="molecule type" value="Genomic_DNA"/>
</dbReference>
<dbReference type="RefSeq" id="WP_003879503.1">
    <property type="nucleotide sequence ID" value="NZ_CP106873.1"/>
</dbReference>
<dbReference type="SMR" id="Q73S29"/>
<dbReference type="STRING" id="262316.MAP_4247"/>
<dbReference type="KEGG" id="mpa:MAP_4247"/>
<dbReference type="PATRIC" id="fig|262316.17.peg.4521"/>
<dbReference type="eggNOG" id="COG1109">
    <property type="taxonomic scope" value="Bacteria"/>
</dbReference>
<dbReference type="HOGENOM" id="CLU_016950_7_0_11"/>
<dbReference type="Proteomes" id="UP000000580">
    <property type="component" value="Chromosome"/>
</dbReference>
<dbReference type="GO" id="GO:0005829">
    <property type="term" value="C:cytosol"/>
    <property type="evidence" value="ECO:0007669"/>
    <property type="project" value="TreeGrafter"/>
</dbReference>
<dbReference type="GO" id="GO:0000287">
    <property type="term" value="F:magnesium ion binding"/>
    <property type="evidence" value="ECO:0007669"/>
    <property type="project" value="UniProtKB-UniRule"/>
</dbReference>
<dbReference type="GO" id="GO:0008966">
    <property type="term" value="F:phosphoglucosamine mutase activity"/>
    <property type="evidence" value="ECO:0007669"/>
    <property type="project" value="UniProtKB-UniRule"/>
</dbReference>
<dbReference type="GO" id="GO:0004615">
    <property type="term" value="F:phosphomannomutase activity"/>
    <property type="evidence" value="ECO:0007669"/>
    <property type="project" value="TreeGrafter"/>
</dbReference>
<dbReference type="GO" id="GO:0005975">
    <property type="term" value="P:carbohydrate metabolic process"/>
    <property type="evidence" value="ECO:0007669"/>
    <property type="project" value="InterPro"/>
</dbReference>
<dbReference type="GO" id="GO:0009252">
    <property type="term" value="P:peptidoglycan biosynthetic process"/>
    <property type="evidence" value="ECO:0007669"/>
    <property type="project" value="TreeGrafter"/>
</dbReference>
<dbReference type="GO" id="GO:0006048">
    <property type="term" value="P:UDP-N-acetylglucosamine biosynthetic process"/>
    <property type="evidence" value="ECO:0007669"/>
    <property type="project" value="TreeGrafter"/>
</dbReference>
<dbReference type="CDD" id="cd05802">
    <property type="entry name" value="GlmM"/>
    <property type="match status" value="1"/>
</dbReference>
<dbReference type="FunFam" id="3.30.310.50:FF:000001">
    <property type="entry name" value="Phosphoglucosamine mutase"/>
    <property type="match status" value="1"/>
</dbReference>
<dbReference type="FunFam" id="3.40.120.10:FF:000001">
    <property type="entry name" value="Phosphoglucosamine mutase"/>
    <property type="match status" value="1"/>
</dbReference>
<dbReference type="FunFam" id="3.40.120.10:FF:000003">
    <property type="entry name" value="Phosphoglucosamine mutase"/>
    <property type="match status" value="1"/>
</dbReference>
<dbReference type="Gene3D" id="3.40.120.10">
    <property type="entry name" value="Alpha-D-Glucose-1,6-Bisphosphate, subunit A, domain 3"/>
    <property type="match status" value="3"/>
</dbReference>
<dbReference type="Gene3D" id="3.30.310.50">
    <property type="entry name" value="Alpha-D-phosphohexomutase, C-terminal domain"/>
    <property type="match status" value="1"/>
</dbReference>
<dbReference type="HAMAP" id="MF_01554_B">
    <property type="entry name" value="GlmM_B"/>
    <property type="match status" value="1"/>
</dbReference>
<dbReference type="InterPro" id="IPR005844">
    <property type="entry name" value="A-D-PHexomutase_a/b/a-I"/>
</dbReference>
<dbReference type="InterPro" id="IPR016055">
    <property type="entry name" value="A-D-PHexomutase_a/b/a-I/II/III"/>
</dbReference>
<dbReference type="InterPro" id="IPR005845">
    <property type="entry name" value="A-D-PHexomutase_a/b/a-II"/>
</dbReference>
<dbReference type="InterPro" id="IPR005846">
    <property type="entry name" value="A-D-PHexomutase_a/b/a-III"/>
</dbReference>
<dbReference type="InterPro" id="IPR005843">
    <property type="entry name" value="A-D-PHexomutase_C"/>
</dbReference>
<dbReference type="InterPro" id="IPR036900">
    <property type="entry name" value="A-D-PHexomutase_C_sf"/>
</dbReference>
<dbReference type="InterPro" id="IPR016066">
    <property type="entry name" value="A-D-PHexomutase_CS"/>
</dbReference>
<dbReference type="InterPro" id="IPR005841">
    <property type="entry name" value="Alpha-D-phosphohexomutase_SF"/>
</dbReference>
<dbReference type="InterPro" id="IPR006352">
    <property type="entry name" value="GlmM_bact"/>
</dbReference>
<dbReference type="InterPro" id="IPR050060">
    <property type="entry name" value="Phosphoglucosamine_mutase"/>
</dbReference>
<dbReference type="NCBIfam" id="TIGR01455">
    <property type="entry name" value="glmM"/>
    <property type="match status" value="1"/>
</dbReference>
<dbReference type="PANTHER" id="PTHR42946:SF1">
    <property type="entry name" value="PHOSPHOGLUCOMUTASE (ALPHA-D-GLUCOSE-1,6-BISPHOSPHATE-DEPENDENT)"/>
    <property type="match status" value="1"/>
</dbReference>
<dbReference type="PANTHER" id="PTHR42946">
    <property type="entry name" value="PHOSPHOHEXOSE MUTASE"/>
    <property type="match status" value="1"/>
</dbReference>
<dbReference type="Pfam" id="PF02878">
    <property type="entry name" value="PGM_PMM_I"/>
    <property type="match status" value="1"/>
</dbReference>
<dbReference type="Pfam" id="PF02879">
    <property type="entry name" value="PGM_PMM_II"/>
    <property type="match status" value="1"/>
</dbReference>
<dbReference type="Pfam" id="PF02880">
    <property type="entry name" value="PGM_PMM_III"/>
    <property type="match status" value="1"/>
</dbReference>
<dbReference type="Pfam" id="PF00408">
    <property type="entry name" value="PGM_PMM_IV"/>
    <property type="match status" value="1"/>
</dbReference>
<dbReference type="PRINTS" id="PR00509">
    <property type="entry name" value="PGMPMM"/>
</dbReference>
<dbReference type="SUPFAM" id="SSF55957">
    <property type="entry name" value="Phosphoglucomutase, C-terminal domain"/>
    <property type="match status" value="1"/>
</dbReference>
<dbReference type="SUPFAM" id="SSF53738">
    <property type="entry name" value="Phosphoglucomutase, first 3 domains"/>
    <property type="match status" value="3"/>
</dbReference>
<dbReference type="PROSITE" id="PS00710">
    <property type="entry name" value="PGM_PMM"/>
    <property type="match status" value="1"/>
</dbReference>
<keyword id="KW-0413">Isomerase</keyword>
<keyword id="KW-0460">Magnesium</keyword>
<keyword id="KW-0479">Metal-binding</keyword>
<keyword id="KW-0597">Phosphoprotein</keyword>
<keyword id="KW-1185">Reference proteome</keyword>
<name>GLMM_MYCPA</name>
<accession>Q73S29</accession>
<evidence type="ECO:0000255" key="1">
    <source>
        <dbReference type="HAMAP-Rule" id="MF_01554"/>
    </source>
</evidence>
<comment type="function">
    <text evidence="1">Catalyzes the conversion of glucosamine-6-phosphate to glucosamine-1-phosphate.</text>
</comment>
<comment type="catalytic activity">
    <reaction evidence="1">
        <text>alpha-D-glucosamine 1-phosphate = D-glucosamine 6-phosphate</text>
        <dbReference type="Rhea" id="RHEA:23424"/>
        <dbReference type="ChEBI" id="CHEBI:58516"/>
        <dbReference type="ChEBI" id="CHEBI:58725"/>
        <dbReference type="EC" id="5.4.2.10"/>
    </reaction>
</comment>
<comment type="cofactor">
    <cofactor evidence="1">
        <name>Mg(2+)</name>
        <dbReference type="ChEBI" id="CHEBI:18420"/>
    </cofactor>
    <text evidence="1">Binds 1 Mg(2+) ion per subunit.</text>
</comment>
<comment type="PTM">
    <text evidence="1">Activated by phosphorylation.</text>
</comment>
<comment type="similarity">
    <text evidence="1">Belongs to the phosphohexose mutase family.</text>
</comment>
<feature type="chain" id="PRO_0000147917" description="Phosphoglucosamine mutase">
    <location>
        <begin position="1"/>
        <end position="444"/>
    </location>
</feature>
<feature type="active site" description="Phosphoserine intermediate" evidence="1">
    <location>
        <position position="102"/>
    </location>
</feature>
<feature type="binding site" description="via phosphate group" evidence="1">
    <location>
        <position position="102"/>
    </location>
    <ligand>
        <name>Mg(2+)</name>
        <dbReference type="ChEBI" id="CHEBI:18420"/>
    </ligand>
</feature>
<feature type="binding site" evidence="1">
    <location>
        <position position="239"/>
    </location>
    <ligand>
        <name>Mg(2+)</name>
        <dbReference type="ChEBI" id="CHEBI:18420"/>
    </ligand>
</feature>
<feature type="binding site" evidence="1">
    <location>
        <position position="241"/>
    </location>
    <ligand>
        <name>Mg(2+)</name>
        <dbReference type="ChEBI" id="CHEBI:18420"/>
    </ligand>
</feature>
<feature type="binding site" evidence="1">
    <location>
        <position position="243"/>
    </location>
    <ligand>
        <name>Mg(2+)</name>
        <dbReference type="ChEBI" id="CHEBI:18420"/>
    </ligand>
</feature>
<feature type="modified residue" description="Phosphoserine" evidence="1">
    <location>
        <position position="102"/>
    </location>
</feature>
<protein>
    <recommendedName>
        <fullName evidence="1">Phosphoglucosamine mutase</fullName>
        <ecNumber evidence="1">5.4.2.10</ecNumber>
    </recommendedName>
</protein>
<gene>
    <name evidence="1" type="primary">glmM</name>
    <name type="ordered locus">MAP_4247</name>
</gene>
<reference key="1">
    <citation type="journal article" date="2005" name="Proc. Natl. Acad. Sci. U.S.A.">
        <title>The complete genome sequence of Mycobacterium avium subspecies paratuberculosis.</title>
        <authorList>
            <person name="Li L."/>
            <person name="Bannantine J.P."/>
            <person name="Zhang Q."/>
            <person name="Amonsin A."/>
            <person name="May B.J."/>
            <person name="Alt D."/>
            <person name="Banerji N."/>
            <person name="Kanjilal S."/>
            <person name="Kapur V."/>
        </authorList>
    </citation>
    <scope>NUCLEOTIDE SEQUENCE [LARGE SCALE GENOMIC DNA]</scope>
    <source>
        <strain>ATCC BAA-968 / K-10</strain>
    </source>
</reference>
<organism>
    <name type="scientific">Mycolicibacterium paratuberculosis (strain ATCC BAA-968 / K-10)</name>
    <name type="common">Mycobacterium paratuberculosis</name>
    <dbReference type="NCBI Taxonomy" id="262316"/>
    <lineage>
        <taxon>Bacteria</taxon>
        <taxon>Bacillati</taxon>
        <taxon>Actinomycetota</taxon>
        <taxon>Actinomycetes</taxon>
        <taxon>Mycobacteriales</taxon>
        <taxon>Mycobacteriaceae</taxon>
        <taxon>Mycobacterium</taxon>
        <taxon>Mycobacterium avium complex (MAC)</taxon>
    </lineage>
</organism>
<proteinExistence type="inferred from homology"/>